<accession>Q5HZA1</accession>
<reference key="1">
    <citation type="submission" date="2005-01" db="EMBL/GenBank/DDBJ databases">
        <authorList>
            <consortium name="NIH - Xenopus Gene Collection (XGC) project"/>
        </authorList>
    </citation>
    <scope>NUCLEOTIDE SEQUENCE [LARGE SCALE MRNA]</scope>
    <source>
        <tissue>Egg</tissue>
    </source>
</reference>
<keyword id="KW-0009">Actin-binding</keyword>
<keyword id="KW-0966">Cell projection</keyword>
<keyword id="KW-0963">Cytoplasm</keyword>
<keyword id="KW-0217">Developmental protein</keyword>
<keyword id="KW-0524">Neurogenesis</keyword>
<keyword id="KW-1185">Reference proteome</keyword>
<keyword id="KW-0677">Repeat</keyword>
<organism>
    <name type="scientific">Xenopus laevis</name>
    <name type="common">African clawed frog</name>
    <dbReference type="NCBI Taxonomy" id="8355"/>
    <lineage>
        <taxon>Eukaryota</taxon>
        <taxon>Metazoa</taxon>
        <taxon>Chordata</taxon>
        <taxon>Craniata</taxon>
        <taxon>Vertebrata</taxon>
        <taxon>Euteleostomi</taxon>
        <taxon>Amphibia</taxon>
        <taxon>Batrachia</taxon>
        <taxon>Anura</taxon>
        <taxon>Pipoidea</taxon>
        <taxon>Pipidae</taxon>
        <taxon>Xenopodinae</taxon>
        <taxon>Xenopus</taxon>
        <taxon>Xenopus</taxon>
    </lineage>
</organism>
<protein>
    <recommendedName>
        <fullName>Phosphatase and actin regulator 4-A</fullName>
    </recommendedName>
</protein>
<gene>
    <name type="primary">phactr4-a</name>
</gene>
<feature type="chain" id="PRO_0000287310" description="Phosphatase and actin regulator 4-A">
    <location>
        <begin position="1"/>
        <end position="694"/>
    </location>
</feature>
<feature type="repeat" description="RPEL 1">
    <location>
        <begin position="55"/>
        <end position="80"/>
    </location>
</feature>
<feature type="repeat" description="RPEL 2">
    <location>
        <begin position="576"/>
        <end position="601"/>
    </location>
</feature>
<feature type="repeat" description="RPEL 3">
    <location>
        <begin position="613"/>
        <end position="638"/>
    </location>
</feature>
<feature type="region of interest" description="Disordered" evidence="2">
    <location>
        <begin position="1"/>
        <end position="29"/>
    </location>
</feature>
<feature type="region of interest" description="Disordered" evidence="2">
    <location>
        <begin position="42"/>
        <end position="169"/>
    </location>
</feature>
<feature type="region of interest" description="Disordered" evidence="2">
    <location>
        <begin position="192"/>
        <end position="403"/>
    </location>
</feature>
<feature type="region of interest" description="Disordered" evidence="2">
    <location>
        <begin position="426"/>
        <end position="445"/>
    </location>
</feature>
<feature type="region of interest" description="Disordered" evidence="2">
    <location>
        <begin position="450"/>
        <end position="572"/>
    </location>
</feature>
<feature type="compositionally biased region" description="Basic and acidic residues" evidence="2">
    <location>
        <begin position="1"/>
        <end position="13"/>
    </location>
</feature>
<feature type="compositionally biased region" description="Basic and acidic residues" evidence="2">
    <location>
        <begin position="46"/>
        <end position="72"/>
    </location>
</feature>
<feature type="compositionally biased region" description="Polar residues" evidence="2">
    <location>
        <begin position="240"/>
        <end position="267"/>
    </location>
</feature>
<feature type="compositionally biased region" description="Low complexity" evidence="2">
    <location>
        <begin position="300"/>
        <end position="317"/>
    </location>
</feature>
<feature type="compositionally biased region" description="Pro residues" evidence="2">
    <location>
        <begin position="318"/>
        <end position="327"/>
    </location>
</feature>
<feature type="compositionally biased region" description="Pro residues" evidence="2">
    <location>
        <begin position="372"/>
        <end position="381"/>
    </location>
</feature>
<feature type="compositionally biased region" description="Acidic residues" evidence="2">
    <location>
        <begin position="455"/>
        <end position="467"/>
    </location>
</feature>
<feature type="compositionally biased region" description="Acidic residues" evidence="2">
    <location>
        <begin position="499"/>
        <end position="511"/>
    </location>
</feature>
<feature type="compositionally biased region" description="Acidic residues" evidence="2">
    <location>
        <begin position="519"/>
        <end position="529"/>
    </location>
</feature>
<dbReference type="EMBL" id="BC089117">
    <property type="protein sequence ID" value="AAH89117.1"/>
    <property type="molecule type" value="mRNA"/>
</dbReference>
<dbReference type="RefSeq" id="NP_001089977.1">
    <property type="nucleotide sequence ID" value="NM_001096508.1"/>
</dbReference>
<dbReference type="SMR" id="Q5HZA1"/>
<dbReference type="DNASU" id="735048"/>
<dbReference type="GeneID" id="735048"/>
<dbReference type="KEGG" id="xla:735048"/>
<dbReference type="AGR" id="Xenbase:XB-GENE-5930087"/>
<dbReference type="CTD" id="735048"/>
<dbReference type="Xenbase" id="XB-GENE-5930087">
    <property type="gene designation" value="phactr4.S"/>
</dbReference>
<dbReference type="OMA" id="TMNRSPR"/>
<dbReference type="OrthoDB" id="5563016at2759"/>
<dbReference type="Proteomes" id="UP000186698">
    <property type="component" value="Chromosome 2S"/>
</dbReference>
<dbReference type="Bgee" id="735048">
    <property type="expression patterns" value="Expressed in egg cell and 19 other cell types or tissues"/>
</dbReference>
<dbReference type="GO" id="GO:0005737">
    <property type="term" value="C:cytoplasm"/>
    <property type="evidence" value="ECO:0007669"/>
    <property type="project" value="UniProtKB-SubCell"/>
</dbReference>
<dbReference type="GO" id="GO:0030027">
    <property type="term" value="C:lamellipodium"/>
    <property type="evidence" value="ECO:0000250"/>
    <property type="project" value="UniProtKB"/>
</dbReference>
<dbReference type="GO" id="GO:0003779">
    <property type="term" value="F:actin binding"/>
    <property type="evidence" value="ECO:0000250"/>
    <property type="project" value="UniProtKB"/>
</dbReference>
<dbReference type="GO" id="GO:0008157">
    <property type="term" value="F:protein phosphatase 1 binding"/>
    <property type="evidence" value="ECO:0000250"/>
    <property type="project" value="UniProtKB"/>
</dbReference>
<dbReference type="GO" id="GO:0072542">
    <property type="term" value="F:protein phosphatase activator activity"/>
    <property type="evidence" value="ECO:0000250"/>
    <property type="project" value="UniProtKB"/>
</dbReference>
<dbReference type="GO" id="GO:0030036">
    <property type="term" value="P:actin cytoskeleton organization"/>
    <property type="evidence" value="ECO:0000250"/>
    <property type="project" value="UniProtKB"/>
</dbReference>
<dbReference type="GO" id="GO:0061386">
    <property type="term" value="P:closure of optic fissure"/>
    <property type="evidence" value="ECO:0000250"/>
    <property type="project" value="UniProtKB"/>
</dbReference>
<dbReference type="GO" id="GO:0048484">
    <property type="term" value="P:enteric nervous system development"/>
    <property type="evidence" value="ECO:0000250"/>
    <property type="project" value="UniProtKB"/>
</dbReference>
<dbReference type="GO" id="GO:2001045">
    <property type="term" value="P:negative regulation of integrin-mediated signaling pathway"/>
    <property type="evidence" value="ECO:0000250"/>
    <property type="project" value="UniProtKB"/>
</dbReference>
<dbReference type="GO" id="GO:0001755">
    <property type="term" value="P:neural crest cell migration"/>
    <property type="evidence" value="ECO:0000250"/>
    <property type="project" value="UniProtKB"/>
</dbReference>
<dbReference type="GO" id="GO:0001843">
    <property type="term" value="P:neural tube closure"/>
    <property type="evidence" value="ECO:0000250"/>
    <property type="project" value="UniProtKB"/>
</dbReference>
<dbReference type="GO" id="GO:0043085">
    <property type="term" value="P:positive regulation of catalytic activity"/>
    <property type="evidence" value="ECO:0000250"/>
    <property type="project" value="UniProtKB"/>
</dbReference>
<dbReference type="GO" id="GO:0051726">
    <property type="term" value="P:regulation of cell cycle"/>
    <property type="evidence" value="ECO:0000250"/>
    <property type="project" value="UniProtKB"/>
</dbReference>
<dbReference type="GO" id="GO:0007266">
    <property type="term" value="P:Rho protein signal transduction"/>
    <property type="evidence" value="ECO:0000250"/>
    <property type="project" value="UniProtKB"/>
</dbReference>
<dbReference type="Gene3D" id="6.10.140.1750">
    <property type="match status" value="1"/>
</dbReference>
<dbReference type="Gene3D" id="6.10.140.2130">
    <property type="match status" value="1"/>
</dbReference>
<dbReference type="InterPro" id="IPR004018">
    <property type="entry name" value="RPEL_repeat"/>
</dbReference>
<dbReference type="PANTHER" id="PTHR12751:SF4">
    <property type="entry name" value="PHOSPHATASE AND ACTIN REGULATOR 4"/>
    <property type="match status" value="1"/>
</dbReference>
<dbReference type="PANTHER" id="PTHR12751">
    <property type="entry name" value="PHOSPHATASE AND ACTIN REGULATOR PHACTR"/>
    <property type="match status" value="1"/>
</dbReference>
<dbReference type="Pfam" id="PF02755">
    <property type="entry name" value="RPEL"/>
    <property type="match status" value="3"/>
</dbReference>
<dbReference type="SMART" id="SM00707">
    <property type="entry name" value="RPEL"/>
    <property type="match status" value="3"/>
</dbReference>
<dbReference type="PROSITE" id="PS51073">
    <property type="entry name" value="RPEL"/>
    <property type="match status" value="3"/>
</dbReference>
<proteinExistence type="evidence at transcript level"/>
<comment type="function">
    <text evidence="1">Regulator of protein phosphatase 1 (PP1) required for neural tube and optic fissure closure, and enteric neural crest cell (ENCCs) migration during development. Acts as an activator of PP1. During neural tube closure, localizes to the ventral neural tube and activates PP1, leading to down-regulate cell proliferation within cranial neural tissue and the neural retina. Also acts as a regulator of migration of enteric neural crest cells (ENCCs) by activating PP1, leading to repression of the integrin signaling through the rho/rock pathway (By similarity).</text>
</comment>
<comment type="subunit">
    <text evidence="1">Binds ppp1ca and actin.</text>
</comment>
<comment type="subcellular location">
    <subcellularLocation>
        <location evidence="1">Cytoplasm</location>
    </subcellularLocation>
    <subcellularLocation>
        <location evidence="1">Cell projection</location>
        <location evidence="1">Lamellipodium</location>
    </subcellularLocation>
</comment>
<comment type="similarity">
    <text evidence="3">Belongs to the phosphatase and actin regulator family.</text>
</comment>
<sequence>MEDRSEEGGDHSEMPSAPSTPPSKRKSKFAGFGKFFKPWKWRKRKSSDSFRETSEVLERKISTRKPREELIKRGLLVEVPEEDGSIPSESPPLRNGHMSVEPANPPEDSGGLKRKTRPDSTGPRPKSGETTVQPCATAEVAPLEPHATAEVSPVQPQASAEVTPVQPLPVSEVAPMQPLPVNEVAPMQPLPVNEVAPKQPHHVSEVASVVSRPTSEVAPVQKVSRDFSKQPLLPPKRPLSISTSVTQESAVAGQKSDSSNRLQSSAPVPTPRTIHPPASSKQPPVPPPKPQNRNSNPLMAELSLALAGSPLSPAGSRPSPPLPPKRAMPPSTDAVTNKENALGPASLPPTPANEIITPSPPSPPASSHIPVSNPPVPPLTLAPPYTEVEKEQSASPIPLHIRIQQALNSPQPLPLLDSSQRAQSLLFMQNDMGPSEEGTRVRSLPVTIELLKVPDDEDDESLEDESLSPESSESHTSKVYIGDVPSVTVIPSYLPTCVQEEEEGGVSDTDSEGPVLYRDDEEEEEEEETSALANKVKRKDTLAMKLSGRMASEDSNSEFPQRSREEWNQIRQDIGTQLNRRLSQRPTAEELEQRNILQKNEADRLAEKKEIKRRLTRKLSQRPTVAELVERKILRFNEYVEATDAHDYDRRADKPWTRLTPADKAAIRKELNEFKSTEMAVHAESKHFTRFHRP</sequence>
<evidence type="ECO:0000250" key="1"/>
<evidence type="ECO:0000256" key="2">
    <source>
        <dbReference type="SAM" id="MobiDB-lite"/>
    </source>
</evidence>
<evidence type="ECO:0000305" key="3"/>
<name>PHR4A_XENLA</name>